<sequence>MNDVVLSCKNVSKKYTEFKTDIAILKDVNLEIKKGEKVAILGLSGSGKTTLLNVLGGLDKCSAGEVYLMGERFDNQSVNKRAKMRNKHLGFIYQLHHLLPEFTAIENVMIPLAITKKYTKKESIKLANEILKKVGLDHRADHKPAELSGGERQRVAIARALVTNPNCILADEPTGNLDSQRSESIFALMQQLSDDFGTSFVIVTHDEKLASRMNKIYRLVDGELELVINSN</sequence>
<keyword id="KW-0067">ATP-binding</keyword>
<keyword id="KW-0997">Cell inner membrane</keyword>
<keyword id="KW-1003">Cell membrane</keyword>
<keyword id="KW-0472">Membrane</keyword>
<keyword id="KW-0547">Nucleotide-binding</keyword>
<keyword id="KW-1278">Translocase</keyword>
<keyword id="KW-0813">Transport</keyword>
<reference key="1">
    <citation type="journal article" date="2007" name="PLoS ONE">
        <title>Genome sequencing shows that European isolates of Francisella tularensis subspecies tularensis are almost identical to US laboratory strain Schu S4.</title>
        <authorList>
            <person name="Chaudhuri R.R."/>
            <person name="Ren C.-P."/>
            <person name="Desmond L."/>
            <person name="Vincent G.A."/>
            <person name="Silman N.J."/>
            <person name="Brehm J.K."/>
            <person name="Elmore M.J."/>
            <person name="Hudson M.J."/>
            <person name="Forsman M."/>
            <person name="Isherwood K.E."/>
            <person name="Gurycova D."/>
            <person name="Minton N.P."/>
            <person name="Titball R.W."/>
            <person name="Pallen M.J."/>
            <person name="Vipond R."/>
        </authorList>
    </citation>
    <scope>NUCLEOTIDE SEQUENCE [LARGE SCALE GENOMIC DNA]</scope>
    <source>
        <strain>FSC 198</strain>
    </source>
</reference>
<evidence type="ECO:0000255" key="1">
    <source>
        <dbReference type="HAMAP-Rule" id="MF_01708"/>
    </source>
</evidence>
<dbReference type="EC" id="7.6.2.-" evidence="1"/>
<dbReference type="EMBL" id="AM286280">
    <property type="protein sequence ID" value="CAL08421.1"/>
    <property type="molecule type" value="Genomic_DNA"/>
</dbReference>
<dbReference type="RefSeq" id="WP_003017997.1">
    <property type="nucleotide sequence ID" value="NC_008245.1"/>
</dbReference>
<dbReference type="SMR" id="Q14J44"/>
<dbReference type="KEGG" id="ftf:FTF0405"/>
<dbReference type="HOGENOM" id="CLU_000604_1_22_6"/>
<dbReference type="GO" id="GO:0005886">
    <property type="term" value="C:plasma membrane"/>
    <property type="evidence" value="ECO:0007669"/>
    <property type="project" value="UniProtKB-SubCell"/>
</dbReference>
<dbReference type="GO" id="GO:0005524">
    <property type="term" value="F:ATP binding"/>
    <property type="evidence" value="ECO:0007669"/>
    <property type="project" value="UniProtKB-KW"/>
</dbReference>
<dbReference type="GO" id="GO:0016887">
    <property type="term" value="F:ATP hydrolysis activity"/>
    <property type="evidence" value="ECO:0007669"/>
    <property type="project" value="InterPro"/>
</dbReference>
<dbReference type="GO" id="GO:0022857">
    <property type="term" value="F:transmembrane transporter activity"/>
    <property type="evidence" value="ECO:0007669"/>
    <property type="project" value="TreeGrafter"/>
</dbReference>
<dbReference type="GO" id="GO:0044874">
    <property type="term" value="P:lipoprotein localization to outer membrane"/>
    <property type="evidence" value="ECO:0007669"/>
    <property type="project" value="TreeGrafter"/>
</dbReference>
<dbReference type="GO" id="GO:0089705">
    <property type="term" value="P:protein localization to outer membrane"/>
    <property type="evidence" value="ECO:0007669"/>
    <property type="project" value="TreeGrafter"/>
</dbReference>
<dbReference type="CDD" id="cd03255">
    <property type="entry name" value="ABC_MJ0796_LolCDE_FtsE"/>
    <property type="match status" value="1"/>
</dbReference>
<dbReference type="FunFam" id="3.40.50.300:FF:000230">
    <property type="entry name" value="Lipoprotein-releasing system ATP-binding protein LolD"/>
    <property type="match status" value="1"/>
</dbReference>
<dbReference type="Gene3D" id="3.40.50.300">
    <property type="entry name" value="P-loop containing nucleotide triphosphate hydrolases"/>
    <property type="match status" value="1"/>
</dbReference>
<dbReference type="InterPro" id="IPR003593">
    <property type="entry name" value="AAA+_ATPase"/>
</dbReference>
<dbReference type="InterPro" id="IPR003439">
    <property type="entry name" value="ABC_transporter-like_ATP-bd"/>
</dbReference>
<dbReference type="InterPro" id="IPR017871">
    <property type="entry name" value="ABC_transporter-like_CS"/>
</dbReference>
<dbReference type="InterPro" id="IPR015854">
    <property type="entry name" value="ABC_transpr_LolD-like"/>
</dbReference>
<dbReference type="InterPro" id="IPR011924">
    <property type="entry name" value="LolD_lipo_ATP-bd"/>
</dbReference>
<dbReference type="InterPro" id="IPR017911">
    <property type="entry name" value="MacB-like_ATP-bd"/>
</dbReference>
<dbReference type="InterPro" id="IPR027417">
    <property type="entry name" value="P-loop_NTPase"/>
</dbReference>
<dbReference type="NCBIfam" id="TIGR02211">
    <property type="entry name" value="LolD_lipo_ex"/>
    <property type="match status" value="1"/>
</dbReference>
<dbReference type="PANTHER" id="PTHR24220">
    <property type="entry name" value="IMPORT ATP-BINDING PROTEIN"/>
    <property type="match status" value="1"/>
</dbReference>
<dbReference type="PANTHER" id="PTHR24220:SF689">
    <property type="entry name" value="LIPOPROTEIN-RELEASING SYSTEM ATP-BINDING PROTEIN LOLD"/>
    <property type="match status" value="1"/>
</dbReference>
<dbReference type="Pfam" id="PF00005">
    <property type="entry name" value="ABC_tran"/>
    <property type="match status" value="1"/>
</dbReference>
<dbReference type="SMART" id="SM00382">
    <property type="entry name" value="AAA"/>
    <property type="match status" value="1"/>
</dbReference>
<dbReference type="SUPFAM" id="SSF52540">
    <property type="entry name" value="P-loop containing nucleoside triphosphate hydrolases"/>
    <property type="match status" value="1"/>
</dbReference>
<dbReference type="PROSITE" id="PS00211">
    <property type="entry name" value="ABC_TRANSPORTER_1"/>
    <property type="match status" value="1"/>
</dbReference>
<dbReference type="PROSITE" id="PS50893">
    <property type="entry name" value="ABC_TRANSPORTER_2"/>
    <property type="match status" value="1"/>
</dbReference>
<dbReference type="PROSITE" id="PS51244">
    <property type="entry name" value="LOLD"/>
    <property type="match status" value="1"/>
</dbReference>
<organism>
    <name type="scientific">Francisella tularensis subsp. tularensis (strain FSC 198)</name>
    <dbReference type="NCBI Taxonomy" id="393115"/>
    <lineage>
        <taxon>Bacteria</taxon>
        <taxon>Pseudomonadati</taxon>
        <taxon>Pseudomonadota</taxon>
        <taxon>Gammaproteobacteria</taxon>
        <taxon>Thiotrichales</taxon>
        <taxon>Francisellaceae</taxon>
        <taxon>Francisella</taxon>
    </lineage>
</organism>
<feature type="chain" id="PRO_0000272088" description="Lipoprotein-releasing system ATP-binding protein LolD">
    <location>
        <begin position="1"/>
        <end position="231"/>
    </location>
</feature>
<feature type="domain" description="ABC transporter" evidence="1">
    <location>
        <begin position="6"/>
        <end position="230"/>
    </location>
</feature>
<feature type="binding site" evidence="1">
    <location>
        <begin position="42"/>
        <end position="49"/>
    </location>
    <ligand>
        <name>ATP</name>
        <dbReference type="ChEBI" id="CHEBI:30616"/>
    </ligand>
</feature>
<name>LOLD_FRAT1</name>
<proteinExistence type="inferred from homology"/>
<protein>
    <recommendedName>
        <fullName evidence="1">Lipoprotein-releasing system ATP-binding protein LolD</fullName>
        <ecNumber evidence="1">7.6.2.-</ecNumber>
    </recommendedName>
</protein>
<accession>Q14J44</accession>
<gene>
    <name evidence="1" type="primary">lolD</name>
    <name type="ordered locus">FTF0405</name>
</gene>
<comment type="function">
    <text evidence="1">Part of the ABC transporter complex LolCDE involved in the translocation of mature outer membrane-directed lipoproteins, from the inner membrane to the periplasmic chaperone, LolA. Responsible for the formation of the LolA-lipoprotein complex in an ATP-dependent manner.</text>
</comment>
<comment type="subunit">
    <text evidence="1">The complex is composed of two ATP-binding proteins (LolD) and two transmembrane proteins (LolC and LolE).</text>
</comment>
<comment type="subcellular location">
    <subcellularLocation>
        <location evidence="1">Cell inner membrane</location>
        <topology evidence="1">Peripheral membrane protein</topology>
    </subcellularLocation>
</comment>
<comment type="similarity">
    <text evidence="1">Belongs to the ABC transporter superfamily. Lipoprotein translocase (TC 3.A.1.125) family.</text>
</comment>